<organism>
    <name type="scientific">Shigella boydii serotype 4 (strain Sb227)</name>
    <dbReference type="NCBI Taxonomy" id="300268"/>
    <lineage>
        <taxon>Bacteria</taxon>
        <taxon>Pseudomonadati</taxon>
        <taxon>Pseudomonadota</taxon>
        <taxon>Gammaproteobacteria</taxon>
        <taxon>Enterobacterales</taxon>
        <taxon>Enterobacteriaceae</taxon>
        <taxon>Shigella</taxon>
    </lineage>
</organism>
<evidence type="ECO:0000255" key="1">
    <source>
        <dbReference type="HAMAP-Rule" id="MF_01633"/>
    </source>
</evidence>
<comment type="function">
    <text evidence="1">Catalyzes the ATP-dependent conversion of 7-carboxy-7-deazaguanine (CDG) to 7-cyano-7-deazaguanine (preQ(0)).</text>
</comment>
<comment type="catalytic activity">
    <reaction evidence="1">
        <text>7-carboxy-7-deazaguanine + NH4(+) + ATP = 7-cyano-7-deazaguanine + ADP + phosphate + H2O + H(+)</text>
        <dbReference type="Rhea" id="RHEA:27982"/>
        <dbReference type="ChEBI" id="CHEBI:15377"/>
        <dbReference type="ChEBI" id="CHEBI:15378"/>
        <dbReference type="ChEBI" id="CHEBI:28938"/>
        <dbReference type="ChEBI" id="CHEBI:30616"/>
        <dbReference type="ChEBI" id="CHEBI:43474"/>
        <dbReference type="ChEBI" id="CHEBI:45075"/>
        <dbReference type="ChEBI" id="CHEBI:61036"/>
        <dbReference type="ChEBI" id="CHEBI:456216"/>
        <dbReference type="EC" id="6.3.4.20"/>
    </reaction>
</comment>
<comment type="cofactor">
    <cofactor evidence="1">
        <name>Zn(2+)</name>
        <dbReference type="ChEBI" id="CHEBI:29105"/>
    </cofactor>
    <text evidence="1">Binds 1 zinc ion per subunit.</text>
</comment>
<comment type="pathway">
    <text evidence="1">Purine metabolism; 7-cyano-7-deazaguanine biosynthesis.</text>
</comment>
<comment type="similarity">
    <text evidence="1">Belongs to the QueC family.</text>
</comment>
<gene>
    <name evidence="1" type="primary">queC</name>
    <name type="ordered locus">SBO_0338</name>
</gene>
<sequence length="231" mass="25480">MKRAVVVFSGGQDSTTCLVQALQQYDEVHCVTFDYGQRHRAEIDVARELALKLGARAHKVLDVTLLNELAVSSLTRDSIPVPDYEPEADGIPNTFVPGRNILFLTLAAIYAYQVKAEAVITGVCETDFSGYPDCRDEFVKALNHAVSLGMAKDIRFETPLMWIDKAETWALADYYGKLDLVRNETLTCYNGIKGDGCGHCAACNLRANGLNHYLADKPTVMAAMKQKTGLR</sequence>
<protein>
    <recommendedName>
        <fullName evidence="1">7-cyano-7-deazaguanine synthase</fullName>
        <ecNumber evidence="1">6.3.4.20</ecNumber>
    </recommendedName>
    <alternativeName>
        <fullName evidence="1">7-cyano-7-carbaguanine synthase</fullName>
    </alternativeName>
    <alternativeName>
        <fullName evidence="1">PreQ(0) synthase</fullName>
    </alternativeName>
    <alternativeName>
        <fullName evidence="1">Queuosine biosynthesis protein QueC</fullName>
    </alternativeName>
</protein>
<accession>Q325F7</accession>
<keyword id="KW-0067">ATP-binding</keyword>
<keyword id="KW-0436">Ligase</keyword>
<keyword id="KW-0479">Metal-binding</keyword>
<keyword id="KW-0547">Nucleotide-binding</keyword>
<keyword id="KW-0671">Queuosine biosynthesis</keyword>
<keyword id="KW-0862">Zinc</keyword>
<name>QUEC_SHIBS</name>
<proteinExistence type="inferred from homology"/>
<reference key="1">
    <citation type="journal article" date="2005" name="Nucleic Acids Res.">
        <title>Genome dynamics and diversity of Shigella species, the etiologic agents of bacillary dysentery.</title>
        <authorList>
            <person name="Yang F."/>
            <person name="Yang J."/>
            <person name="Zhang X."/>
            <person name="Chen L."/>
            <person name="Jiang Y."/>
            <person name="Yan Y."/>
            <person name="Tang X."/>
            <person name="Wang J."/>
            <person name="Xiong Z."/>
            <person name="Dong J."/>
            <person name="Xue Y."/>
            <person name="Zhu Y."/>
            <person name="Xu X."/>
            <person name="Sun L."/>
            <person name="Chen S."/>
            <person name="Nie H."/>
            <person name="Peng J."/>
            <person name="Xu J."/>
            <person name="Wang Y."/>
            <person name="Yuan Z."/>
            <person name="Wen Y."/>
            <person name="Yao Z."/>
            <person name="Shen Y."/>
            <person name="Qiang B."/>
            <person name="Hou Y."/>
            <person name="Yu J."/>
            <person name="Jin Q."/>
        </authorList>
    </citation>
    <scope>NUCLEOTIDE SEQUENCE [LARGE SCALE GENOMIC DNA]</scope>
    <source>
        <strain>Sb227</strain>
    </source>
</reference>
<feature type="chain" id="PRO_0000246922" description="7-cyano-7-deazaguanine synthase">
    <location>
        <begin position="1"/>
        <end position="231"/>
    </location>
</feature>
<feature type="binding site" evidence="1">
    <location>
        <begin position="8"/>
        <end position="18"/>
    </location>
    <ligand>
        <name>ATP</name>
        <dbReference type="ChEBI" id="CHEBI:30616"/>
    </ligand>
</feature>
<feature type="binding site" evidence="1">
    <location>
        <position position="188"/>
    </location>
    <ligand>
        <name>Zn(2+)</name>
        <dbReference type="ChEBI" id="CHEBI:29105"/>
    </ligand>
</feature>
<feature type="binding site" evidence="1">
    <location>
        <position position="197"/>
    </location>
    <ligand>
        <name>Zn(2+)</name>
        <dbReference type="ChEBI" id="CHEBI:29105"/>
    </ligand>
</feature>
<feature type="binding site" evidence="1">
    <location>
        <position position="200"/>
    </location>
    <ligand>
        <name>Zn(2+)</name>
        <dbReference type="ChEBI" id="CHEBI:29105"/>
    </ligand>
</feature>
<feature type="binding site" evidence="1">
    <location>
        <position position="203"/>
    </location>
    <ligand>
        <name>Zn(2+)</name>
        <dbReference type="ChEBI" id="CHEBI:29105"/>
    </ligand>
</feature>
<dbReference type="EC" id="6.3.4.20" evidence="1"/>
<dbReference type="EMBL" id="CP000036">
    <property type="protein sequence ID" value="ABB65051.1"/>
    <property type="molecule type" value="Genomic_DNA"/>
</dbReference>
<dbReference type="RefSeq" id="WP_000817229.1">
    <property type="nucleotide sequence ID" value="NC_007613.1"/>
</dbReference>
<dbReference type="SMR" id="Q325F7"/>
<dbReference type="GeneID" id="93777006"/>
<dbReference type="KEGG" id="sbo:SBO_0338"/>
<dbReference type="HOGENOM" id="CLU_081854_0_0_6"/>
<dbReference type="UniPathway" id="UPA00391"/>
<dbReference type="Proteomes" id="UP000007067">
    <property type="component" value="Chromosome"/>
</dbReference>
<dbReference type="GO" id="GO:0005524">
    <property type="term" value="F:ATP binding"/>
    <property type="evidence" value="ECO:0007669"/>
    <property type="project" value="UniProtKB-UniRule"/>
</dbReference>
<dbReference type="GO" id="GO:0016879">
    <property type="term" value="F:ligase activity, forming carbon-nitrogen bonds"/>
    <property type="evidence" value="ECO:0007669"/>
    <property type="project" value="UniProtKB-UniRule"/>
</dbReference>
<dbReference type="GO" id="GO:0008270">
    <property type="term" value="F:zinc ion binding"/>
    <property type="evidence" value="ECO:0007669"/>
    <property type="project" value="UniProtKB-UniRule"/>
</dbReference>
<dbReference type="GO" id="GO:0008616">
    <property type="term" value="P:queuosine biosynthetic process"/>
    <property type="evidence" value="ECO:0007669"/>
    <property type="project" value="UniProtKB-UniRule"/>
</dbReference>
<dbReference type="CDD" id="cd01995">
    <property type="entry name" value="QueC-like"/>
    <property type="match status" value="1"/>
</dbReference>
<dbReference type="FunFam" id="3.40.50.620:FF:000017">
    <property type="entry name" value="7-cyano-7-deazaguanine synthase"/>
    <property type="match status" value="1"/>
</dbReference>
<dbReference type="Gene3D" id="3.40.50.620">
    <property type="entry name" value="HUPs"/>
    <property type="match status" value="1"/>
</dbReference>
<dbReference type="HAMAP" id="MF_01633">
    <property type="entry name" value="QueC"/>
    <property type="match status" value="1"/>
</dbReference>
<dbReference type="InterPro" id="IPR018317">
    <property type="entry name" value="QueC"/>
</dbReference>
<dbReference type="InterPro" id="IPR014729">
    <property type="entry name" value="Rossmann-like_a/b/a_fold"/>
</dbReference>
<dbReference type="NCBIfam" id="TIGR00364">
    <property type="entry name" value="7-cyano-7-deazaguanine synthase QueC"/>
    <property type="match status" value="1"/>
</dbReference>
<dbReference type="NCBIfam" id="NF008317">
    <property type="entry name" value="PRK11106.1"/>
    <property type="match status" value="1"/>
</dbReference>
<dbReference type="PANTHER" id="PTHR42914">
    <property type="entry name" value="7-CYANO-7-DEAZAGUANINE SYNTHASE"/>
    <property type="match status" value="1"/>
</dbReference>
<dbReference type="PANTHER" id="PTHR42914:SF1">
    <property type="entry name" value="7-CYANO-7-DEAZAGUANINE SYNTHASE"/>
    <property type="match status" value="1"/>
</dbReference>
<dbReference type="Pfam" id="PF06508">
    <property type="entry name" value="QueC"/>
    <property type="match status" value="1"/>
</dbReference>
<dbReference type="PIRSF" id="PIRSF006293">
    <property type="entry name" value="ExsB"/>
    <property type="match status" value="1"/>
</dbReference>
<dbReference type="SUPFAM" id="SSF52402">
    <property type="entry name" value="Adenine nucleotide alpha hydrolases-like"/>
    <property type="match status" value="1"/>
</dbReference>